<sequence length="399" mass="45420">MNKNTISNIECVITKPDRHNLITVIVETESGVTGYGCATFQQRPLAVKTMVDEYLKPLLIGKDANNIEDLWQMMMVNAYWRNGPVINNAISGVDMALWDIKAKLANMPLHQLFGGKSRDAIQVYTHATSDTMEGLYEQVDKYLEQGYQHIRCQLGFYGGVPENIQTAQNPTQGSYYDQDQYIENTVEMFKNLREKYGKQFHILHDVHERLFPNQAIQFAKQVEQYNPFFIEDILPPSQTEWLDNIRNQSSVSLALGELFNNPEEWKALIINRRVDFIRCHVSQIGGITPALKLGHFCESFGVRIAWHCPPDMTPIGAAVNTHLNVHLHNAAIQEHVEYKANTQRVFPNAAEPINGYLYASEIAGIGVEMDCEAAQDFPVEYRPHEWTQSRLPDGSIHTP</sequence>
<name>IMND2_VIBCY</name>
<gene>
    <name type="ORF">A1Q_3065</name>
</gene>
<protein>
    <recommendedName>
        <fullName>D-galactonate dehydratase family member A1Q3065</fullName>
    </recommendedName>
</protein>
<evidence type="ECO:0000250" key="1"/>
<evidence type="ECO:0000269" key="2">
    <source>
    </source>
</evidence>
<evidence type="ECO:0000305" key="3"/>
<dbReference type="EMBL" id="AAWP01000007">
    <property type="protein sequence ID" value="EDL70093.1"/>
    <property type="molecule type" value="Genomic_DNA"/>
</dbReference>
<dbReference type="SMR" id="A6AMN2"/>
<dbReference type="HOGENOM" id="CLU_030273_6_1_6"/>
<dbReference type="GO" id="GO:0000287">
    <property type="term" value="F:magnesium ion binding"/>
    <property type="evidence" value="ECO:0000250"/>
    <property type="project" value="UniProtKB"/>
</dbReference>
<dbReference type="GO" id="GO:0009063">
    <property type="term" value="P:amino acid catabolic process"/>
    <property type="evidence" value="ECO:0007669"/>
    <property type="project" value="InterPro"/>
</dbReference>
<dbReference type="FunFam" id="3.20.20.120:FF:000011">
    <property type="entry name" value="D-galactonate dehydratase family member VSWAT3_13707"/>
    <property type="match status" value="1"/>
</dbReference>
<dbReference type="FunFam" id="3.30.390.10:FF:000002">
    <property type="entry name" value="D-galactonate dehydratase family protein"/>
    <property type="match status" value="1"/>
</dbReference>
<dbReference type="Gene3D" id="3.20.20.120">
    <property type="entry name" value="Enolase-like C-terminal domain"/>
    <property type="match status" value="1"/>
</dbReference>
<dbReference type="Gene3D" id="3.30.390.10">
    <property type="entry name" value="Enolase-like, N-terminal domain"/>
    <property type="match status" value="1"/>
</dbReference>
<dbReference type="InterPro" id="IPR034589">
    <property type="entry name" value="D-mannonate_dehydratase-like"/>
</dbReference>
<dbReference type="InterPro" id="IPR034593">
    <property type="entry name" value="DgoD-like"/>
</dbReference>
<dbReference type="InterPro" id="IPR036849">
    <property type="entry name" value="Enolase-like_C_sf"/>
</dbReference>
<dbReference type="InterPro" id="IPR029017">
    <property type="entry name" value="Enolase-like_N"/>
</dbReference>
<dbReference type="InterPro" id="IPR029065">
    <property type="entry name" value="Enolase_C-like"/>
</dbReference>
<dbReference type="InterPro" id="IPR018110">
    <property type="entry name" value="Mandel_Rmase/mucon_lact_enz_CS"/>
</dbReference>
<dbReference type="InterPro" id="IPR013342">
    <property type="entry name" value="Mandelate_racemase_C"/>
</dbReference>
<dbReference type="InterPro" id="IPR013341">
    <property type="entry name" value="Mandelate_racemase_N_dom"/>
</dbReference>
<dbReference type="PANTHER" id="PTHR48080">
    <property type="entry name" value="D-GALACTONATE DEHYDRATASE-RELATED"/>
    <property type="match status" value="1"/>
</dbReference>
<dbReference type="PANTHER" id="PTHR48080:SF6">
    <property type="entry name" value="STARVATION-SENSING PROTEIN RSPA"/>
    <property type="match status" value="1"/>
</dbReference>
<dbReference type="Pfam" id="PF13378">
    <property type="entry name" value="MR_MLE_C"/>
    <property type="match status" value="1"/>
</dbReference>
<dbReference type="Pfam" id="PF02746">
    <property type="entry name" value="MR_MLE_N"/>
    <property type="match status" value="1"/>
</dbReference>
<dbReference type="SFLD" id="SFLDS00001">
    <property type="entry name" value="Enolase"/>
    <property type="match status" value="1"/>
</dbReference>
<dbReference type="SFLD" id="SFLDG00033">
    <property type="entry name" value="mannonate_dehydratase"/>
    <property type="match status" value="1"/>
</dbReference>
<dbReference type="SMART" id="SM00922">
    <property type="entry name" value="MR_MLE"/>
    <property type="match status" value="1"/>
</dbReference>
<dbReference type="SUPFAM" id="SSF51604">
    <property type="entry name" value="Enolase C-terminal domain-like"/>
    <property type="match status" value="1"/>
</dbReference>
<dbReference type="SUPFAM" id="SSF54826">
    <property type="entry name" value="Enolase N-terminal domain-like"/>
    <property type="match status" value="1"/>
</dbReference>
<dbReference type="PROSITE" id="PS00908">
    <property type="entry name" value="MR_MLE_1"/>
    <property type="match status" value="1"/>
</dbReference>
<organism>
    <name type="scientific">Vibrio campbellii (strain HY01)</name>
    <dbReference type="NCBI Taxonomy" id="410291"/>
    <lineage>
        <taxon>Bacteria</taxon>
        <taxon>Pseudomonadati</taxon>
        <taxon>Pseudomonadota</taxon>
        <taxon>Gammaproteobacteria</taxon>
        <taxon>Vibrionales</taxon>
        <taxon>Vibrionaceae</taxon>
        <taxon>Vibrio</taxon>
    </lineage>
</organism>
<reference key="1">
    <citation type="submission" date="2007-01" db="EMBL/GenBank/DDBJ databases">
        <title>Annotation of Vibrio harveyi HY01.</title>
        <authorList>
            <person name="Heidelberg J."/>
            <person name="Sebastian Y."/>
        </authorList>
    </citation>
    <scope>NUCLEOTIDE SEQUENCE [LARGE SCALE GENOMIC DNA]</scope>
    <source>
        <strain>HY01</strain>
    </source>
</reference>
<reference key="2">
    <citation type="journal article" date="2014" name="Biochemistry">
        <title>Discovery of function in the enolase superfamily: D-mannonate and D-gluconate dehydratases in the D-mannonate dehydratase subgroup.</title>
        <authorList>
            <person name="Wichelecki D.J."/>
            <person name="Balthazor B.M."/>
            <person name="Chau A.C."/>
            <person name="Vetting M.W."/>
            <person name="Fedorov A.A."/>
            <person name="Fedorov E.V."/>
            <person name="Lukk T."/>
            <person name="Patskovsky Y.V."/>
            <person name="Stead M.B."/>
            <person name="Hillerich B.S."/>
            <person name="Seidel R.D."/>
            <person name="Almo S.C."/>
            <person name="Gerlt J.A."/>
        </authorList>
    </citation>
    <scope>FUNCTION</scope>
    <scope>LACK OF D-MANNONATE DEHYDRATASE ACTIVITY</scope>
    <source>
        <strain>HY01</strain>
    </source>
</reference>
<keyword id="KW-0460">Magnesium</keyword>
<keyword id="KW-0479">Metal-binding</keyword>
<accession>A6AMN2</accession>
<feature type="chain" id="PRO_0000429919" description="D-galactonate dehydratase family member A1Q3065">
    <location>
        <begin position="1"/>
        <end position="399"/>
    </location>
</feature>
<feature type="binding site" evidence="1">
    <location>
        <position position="205"/>
    </location>
    <ligand>
        <name>Mg(2+)</name>
        <dbReference type="ChEBI" id="CHEBI:18420"/>
    </ligand>
</feature>
<feature type="binding site" evidence="1">
    <location>
        <position position="207"/>
    </location>
    <ligand>
        <name>D-arabinonate</name>
        <dbReference type="ChEBI" id="CHEBI:16157"/>
    </ligand>
</feature>
<feature type="binding site" evidence="1">
    <location>
        <position position="231"/>
    </location>
    <ligand>
        <name>Mg(2+)</name>
        <dbReference type="ChEBI" id="CHEBI:18420"/>
    </ligand>
</feature>
<feature type="binding site" evidence="1">
    <location>
        <position position="257"/>
    </location>
    <ligand>
        <name>D-arabinonate</name>
        <dbReference type="ChEBI" id="CHEBI:16157"/>
    </ligand>
</feature>
<feature type="binding site" evidence="1">
    <location>
        <position position="257"/>
    </location>
    <ligand>
        <name>Mg(2+)</name>
        <dbReference type="ChEBI" id="CHEBI:18420"/>
    </ligand>
</feature>
<feature type="binding site" evidence="1">
    <location>
        <position position="278"/>
    </location>
    <ligand>
        <name>D-arabinonate</name>
        <dbReference type="ChEBI" id="CHEBI:16157"/>
    </ligand>
</feature>
<feature type="binding site" evidence="1">
    <location>
        <position position="307"/>
    </location>
    <ligand>
        <name>D-arabinonate</name>
        <dbReference type="ChEBI" id="CHEBI:16157"/>
    </ligand>
</feature>
<feature type="binding site" evidence="1">
    <location>
        <position position="334"/>
    </location>
    <ligand>
        <name>D-arabinonate</name>
        <dbReference type="ChEBI" id="CHEBI:16157"/>
    </ligand>
</feature>
<proteinExistence type="inferred from homology"/>
<comment type="function">
    <text evidence="2">Has no detectable activity with D-mannonate and with a panel of 70 other acid sugars (in vitro), in spite of the conservation of the residues that are expected to be important for catalytic activity and cofactor binding. May have evolved a divergent function.</text>
</comment>
<comment type="similarity">
    <text evidence="3">Belongs to the mandelate racemase/muconate lactonizing enzyme family. GalD subfamily.</text>
</comment>